<accession>D7T737</accession>
<sequence>MAIEQAWFMEENDEDQRLPHHRNPKQFVSLDHLADLGVLYWKLNPKDYENDQELKEIRESRGYNYMDLLDLCPERVENYEEKLKNFYTEHIHGDEEIRYCLEGSGYFDVRDKEDRWIRIWIKEGDMIVLPAGIYHRFTLDTGNYVKLMRLFVGEPVWTAYNRPQEHHPARKNYINNVTHKVGVPLEAH</sequence>
<reference key="1">
    <citation type="journal article" date="2007" name="Nature">
        <title>The grapevine genome sequence suggests ancestral hexaploidization in major angiosperm phyla.</title>
        <authorList>
            <person name="Jaillon O."/>
            <person name="Aury J.-M."/>
            <person name="Noel B."/>
            <person name="Policriti A."/>
            <person name="Clepet C."/>
            <person name="Casagrande A."/>
            <person name="Choisne N."/>
            <person name="Aubourg S."/>
            <person name="Vitulo N."/>
            <person name="Jubin C."/>
            <person name="Vezzi A."/>
            <person name="Legeai F."/>
            <person name="Hugueney P."/>
            <person name="Dasilva C."/>
            <person name="Horner D."/>
            <person name="Mica E."/>
            <person name="Jublot D."/>
            <person name="Poulain J."/>
            <person name="Bruyere C."/>
            <person name="Billault A."/>
            <person name="Segurens B."/>
            <person name="Gouyvenoux M."/>
            <person name="Ugarte E."/>
            <person name="Cattonaro F."/>
            <person name="Anthouard V."/>
            <person name="Vico V."/>
            <person name="Del Fabbro C."/>
            <person name="Alaux M."/>
            <person name="Di Gaspero G."/>
            <person name="Dumas V."/>
            <person name="Felice N."/>
            <person name="Paillard S."/>
            <person name="Juman I."/>
            <person name="Moroldo M."/>
            <person name="Scalabrin S."/>
            <person name="Canaguier A."/>
            <person name="Le Clainche I."/>
            <person name="Malacrida G."/>
            <person name="Durand E."/>
            <person name="Pesole G."/>
            <person name="Laucou V."/>
            <person name="Chatelet P."/>
            <person name="Merdinoglu D."/>
            <person name="Delledonne M."/>
            <person name="Pezzotti M."/>
            <person name="Lecharny A."/>
            <person name="Scarpelli C."/>
            <person name="Artiguenave F."/>
            <person name="Pe M.E."/>
            <person name="Valle G."/>
            <person name="Morgante M."/>
            <person name="Caboche M."/>
            <person name="Adam-Blondon A.-F."/>
            <person name="Weissenbach J."/>
            <person name="Quetier F."/>
            <person name="Wincker P."/>
        </authorList>
    </citation>
    <scope>NUCLEOTIDE SEQUENCE [LARGE SCALE GENOMIC DNA]</scope>
    <source>
        <strain>cv. Pinot noir / PN40024</strain>
    </source>
</reference>
<dbReference type="EC" id="1.13.11.54" evidence="1"/>
<dbReference type="EC" id="1.13.11.53" evidence="1"/>
<dbReference type="EMBL" id="FN597022">
    <property type="protein sequence ID" value="CBI26308.3"/>
    <property type="molecule type" value="Genomic_DNA"/>
</dbReference>
<dbReference type="SMR" id="D7T737"/>
<dbReference type="FunCoup" id="D7T737">
    <property type="interactions" value="1033"/>
</dbReference>
<dbReference type="STRING" id="29760.D7T737"/>
<dbReference type="PaxDb" id="29760-VIT_05s0020g04070.t01"/>
<dbReference type="EnsemblPlants" id="Vitvi05g00559_t002">
    <property type="protein sequence ID" value="Vitvi05g00559_P002"/>
    <property type="gene ID" value="Vitvi05g00559"/>
</dbReference>
<dbReference type="Gramene" id="Vitvi05g00559_t002">
    <property type="protein sequence ID" value="Vitvi05g00559_P002"/>
    <property type="gene ID" value="Vitvi05g00559"/>
</dbReference>
<dbReference type="eggNOG" id="KOG2107">
    <property type="taxonomic scope" value="Eukaryota"/>
</dbReference>
<dbReference type="HOGENOM" id="CLU_090154_0_0_1"/>
<dbReference type="InParanoid" id="D7T737"/>
<dbReference type="OMA" id="NNYIKLM"/>
<dbReference type="OrthoDB" id="1867259at2759"/>
<dbReference type="UniPathway" id="UPA00904">
    <property type="reaction ID" value="UER00878"/>
</dbReference>
<dbReference type="Proteomes" id="UP000009183">
    <property type="component" value="Chromosome 5"/>
</dbReference>
<dbReference type="ExpressionAtlas" id="D7T737">
    <property type="expression patterns" value="baseline and differential"/>
</dbReference>
<dbReference type="GO" id="GO:0005737">
    <property type="term" value="C:cytoplasm"/>
    <property type="evidence" value="ECO:0007669"/>
    <property type="project" value="UniProtKB-SubCell"/>
</dbReference>
<dbReference type="GO" id="GO:0005634">
    <property type="term" value="C:nucleus"/>
    <property type="evidence" value="ECO:0007669"/>
    <property type="project" value="UniProtKB-SubCell"/>
</dbReference>
<dbReference type="GO" id="GO:0010308">
    <property type="term" value="F:acireductone dioxygenase (Ni2+-requiring) activity"/>
    <property type="evidence" value="ECO:0007669"/>
    <property type="project" value="UniProtKB-UniRule"/>
</dbReference>
<dbReference type="GO" id="GO:0010309">
    <property type="term" value="F:acireductone dioxygenase [iron(II)-requiring] activity"/>
    <property type="evidence" value="ECO:0000318"/>
    <property type="project" value="GO_Central"/>
</dbReference>
<dbReference type="GO" id="GO:0005506">
    <property type="term" value="F:iron ion binding"/>
    <property type="evidence" value="ECO:0007669"/>
    <property type="project" value="UniProtKB-UniRule"/>
</dbReference>
<dbReference type="GO" id="GO:0016151">
    <property type="term" value="F:nickel cation binding"/>
    <property type="evidence" value="ECO:0007669"/>
    <property type="project" value="UniProtKB-UniRule"/>
</dbReference>
<dbReference type="GO" id="GO:0019509">
    <property type="term" value="P:L-methionine salvage from methylthioadenosine"/>
    <property type="evidence" value="ECO:0007669"/>
    <property type="project" value="UniProtKB-UniRule"/>
</dbReference>
<dbReference type="GO" id="GO:0006555">
    <property type="term" value="P:methionine metabolic process"/>
    <property type="evidence" value="ECO:0000318"/>
    <property type="project" value="GO_Central"/>
</dbReference>
<dbReference type="CDD" id="cd02232">
    <property type="entry name" value="cupin_ARD"/>
    <property type="match status" value="1"/>
</dbReference>
<dbReference type="FunFam" id="2.60.120.10:FF:000031">
    <property type="entry name" value="1,2-dihydroxy-3-keto-5-methylthiopentene dioxygenase"/>
    <property type="match status" value="1"/>
</dbReference>
<dbReference type="Gene3D" id="2.60.120.10">
    <property type="entry name" value="Jelly Rolls"/>
    <property type="match status" value="1"/>
</dbReference>
<dbReference type="HAMAP" id="MF_03154">
    <property type="entry name" value="Salvage_MtnD_euk"/>
    <property type="match status" value="1"/>
</dbReference>
<dbReference type="InterPro" id="IPR004313">
    <property type="entry name" value="ARD"/>
</dbReference>
<dbReference type="InterPro" id="IPR027496">
    <property type="entry name" value="ARD_euk"/>
</dbReference>
<dbReference type="InterPro" id="IPR014710">
    <property type="entry name" value="RmlC-like_jellyroll"/>
</dbReference>
<dbReference type="InterPro" id="IPR011051">
    <property type="entry name" value="RmlC_Cupin_sf"/>
</dbReference>
<dbReference type="PANTHER" id="PTHR23418">
    <property type="entry name" value="ACIREDUCTONE DIOXYGENASE"/>
    <property type="match status" value="1"/>
</dbReference>
<dbReference type="PANTHER" id="PTHR23418:SF4">
    <property type="entry name" value="ACIREDUCTONE DIOXYGENASE 4"/>
    <property type="match status" value="1"/>
</dbReference>
<dbReference type="Pfam" id="PF03079">
    <property type="entry name" value="ARD"/>
    <property type="match status" value="1"/>
</dbReference>
<dbReference type="SUPFAM" id="SSF51182">
    <property type="entry name" value="RmlC-like cupins"/>
    <property type="match status" value="1"/>
</dbReference>
<protein>
    <recommendedName>
        <fullName evidence="1">Acireductone dioxygenase 1</fullName>
    </recommendedName>
    <alternativeName>
        <fullName evidence="1">Acireductone dioxygenase (Fe(2+)-requiring) 1</fullName>
        <shortName evidence="1">ARD' 1</shortName>
        <shortName evidence="1">Fe-ARD 1</shortName>
        <ecNumber evidence="1">1.13.11.54</ecNumber>
    </alternativeName>
    <alternativeName>
        <fullName evidence="1">Acireductone dioxygenase (Ni(2+)-requiring) 1</fullName>
        <shortName evidence="1">ARD 1</shortName>
        <shortName evidence="1">Ni-ARD 1</shortName>
        <ecNumber evidence="1">1.13.11.53</ecNumber>
    </alternativeName>
</protein>
<proteinExistence type="inferred from homology"/>
<evidence type="ECO:0000255" key="1">
    <source>
        <dbReference type="HAMAP-Rule" id="MF_03154"/>
    </source>
</evidence>
<gene>
    <name type="ordered locus">VIT_05s0020g04070</name>
</gene>
<name>MTND1_VITVI</name>
<feature type="chain" id="PRO_0000414347" description="Acireductone dioxygenase 1">
    <location>
        <begin position="1"/>
        <end position="188"/>
    </location>
</feature>
<feature type="binding site" evidence="1">
    <location>
        <position position="90"/>
    </location>
    <ligand>
        <name>Fe(2+)</name>
        <dbReference type="ChEBI" id="CHEBI:29033"/>
        <note>for iron-dependent acireductone dioxygenase activity</note>
    </ligand>
</feature>
<feature type="binding site" evidence="1">
    <location>
        <position position="90"/>
    </location>
    <ligand>
        <name>Ni(2+)</name>
        <dbReference type="ChEBI" id="CHEBI:49786"/>
        <note>for nickel-dependent acireductone dioxygenase activity</note>
    </ligand>
</feature>
<feature type="binding site" evidence="1">
    <location>
        <position position="92"/>
    </location>
    <ligand>
        <name>Fe(2+)</name>
        <dbReference type="ChEBI" id="CHEBI:29033"/>
        <note>for iron-dependent acireductone dioxygenase activity</note>
    </ligand>
</feature>
<feature type="binding site" evidence="1">
    <location>
        <position position="92"/>
    </location>
    <ligand>
        <name>Ni(2+)</name>
        <dbReference type="ChEBI" id="CHEBI:49786"/>
        <note>for nickel-dependent acireductone dioxygenase activity</note>
    </ligand>
</feature>
<feature type="binding site" evidence="1">
    <location>
        <position position="96"/>
    </location>
    <ligand>
        <name>Fe(2+)</name>
        <dbReference type="ChEBI" id="CHEBI:29033"/>
        <note>for iron-dependent acireductone dioxygenase activity</note>
    </ligand>
</feature>
<feature type="binding site" evidence="1">
    <location>
        <position position="96"/>
    </location>
    <ligand>
        <name>Ni(2+)</name>
        <dbReference type="ChEBI" id="CHEBI:49786"/>
        <note>for nickel-dependent acireductone dioxygenase activity</note>
    </ligand>
</feature>
<feature type="binding site" evidence="1">
    <location>
        <position position="135"/>
    </location>
    <ligand>
        <name>Fe(2+)</name>
        <dbReference type="ChEBI" id="CHEBI:29033"/>
        <note>for iron-dependent acireductone dioxygenase activity</note>
    </ligand>
</feature>
<feature type="binding site" evidence="1">
    <location>
        <position position="135"/>
    </location>
    <ligand>
        <name>Ni(2+)</name>
        <dbReference type="ChEBI" id="CHEBI:49786"/>
        <note>for nickel-dependent acireductone dioxygenase activity</note>
    </ligand>
</feature>
<keyword id="KW-0028">Amino-acid biosynthesis</keyword>
<keyword id="KW-0963">Cytoplasm</keyword>
<keyword id="KW-0223">Dioxygenase</keyword>
<keyword id="KW-0408">Iron</keyword>
<keyword id="KW-0479">Metal-binding</keyword>
<keyword id="KW-0486">Methionine biosynthesis</keyword>
<keyword id="KW-0533">Nickel</keyword>
<keyword id="KW-0539">Nucleus</keyword>
<keyword id="KW-0560">Oxidoreductase</keyword>
<keyword id="KW-1185">Reference proteome</keyword>
<organism>
    <name type="scientific">Vitis vinifera</name>
    <name type="common">Grape</name>
    <dbReference type="NCBI Taxonomy" id="29760"/>
    <lineage>
        <taxon>Eukaryota</taxon>
        <taxon>Viridiplantae</taxon>
        <taxon>Streptophyta</taxon>
        <taxon>Embryophyta</taxon>
        <taxon>Tracheophyta</taxon>
        <taxon>Spermatophyta</taxon>
        <taxon>Magnoliopsida</taxon>
        <taxon>eudicotyledons</taxon>
        <taxon>Gunneridae</taxon>
        <taxon>Pentapetalae</taxon>
        <taxon>rosids</taxon>
        <taxon>Vitales</taxon>
        <taxon>Vitaceae</taxon>
        <taxon>Viteae</taxon>
        <taxon>Vitis</taxon>
    </lineage>
</organism>
<comment type="function">
    <text evidence="1">Catalyzes 2 different reactions between oxygen and the acireductone 1,2-dihydroxy-3-keto-5-methylthiopentene (DHK-MTPene) depending upon the metal bound in the active site. Fe-containing acireductone dioxygenase (Fe-ARD) produces formate and 2-keto-4-methylthiobutyrate (KMTB), the alpha-ketoacid precursor of methionine in the methionine recycle pathway. Ni-containing acireductone dioxygenase (Ni-ARD) produces methylthiopropionate, carbon monoxide and formate, and does not lie on the methionine recycle pathway.</text>
</comment>
<comment type="catalytic activity">
    <reaction evidence="1">
        <text>1,2-dihydroxy-5-(methylsulfanyl)pent-1-en-3-one + O2 = 4-methylsulfanyl-2-oxobutanoate + formate + 2 H(+)</text>
        <dbReference type="Rhea" id="RHEA:24504"/>
        <dbReference type="ChEBI" id="CHEBI:15378"/>
        <dbReference type="ChEBI" id="CHEBI:15379"/>
        <dbReference type="ChEBI" id="CHEBI:15740"/>
        <dbReference type="ChEBI" id="CHEBI:16723"/>
        <dbReference type="ChEBI" id="CHEBI:49252"/>
        <dbReference type="EC" id="1.13.11.54"/>
    </reaction>
</comment>
<comment type="catalytic activity">
    <reaction evidence="1">
        <text>1,2-dihydroxy-5-(methylsulfanyl)pent-1-en-3-one + O2 = 3-(methylsulfanyl)propanoate + CO + formate + 2 H(+)</text>
        <dbReference type="Rhea" id="RHEA:14161"/>
        <dbReference type="ChEBI" id="CHEBI:15378"/>
        <dbReference type="ChEBI" id="CHEBI:15379"/>
        <dbReference type="ChEBI" id="CHEBI:15740"/>
        <dbReference type="ChEBI" id="CHEBI:17245"/>
        <dbReference type="ChEBI" id="CHEBI:49016"/>
        <dbReference type="ChEBI" id="CHEBI:49252"/>
        <dbReference type="EC" id="1.13.11.53"/>
    </reaction>
</comment>
<comment type="cofactor">
    <cofactor evidence="1">
        <name>Fe(2+)</name>
        <dbReference type="ChEBI" id="CHEBI:29033"/>
    </cofactor>
    <cofactor evidence="1">
        <name>Ni(2+)</name>
        <dbReference type="ChEBI" id="CHEBI:49786"/>
    </cofactor>
    <text evidence="1">Binds either 1 Fe or Ni cation per monomer. Iron-binding promotes an acireductone dioxygenase reaction producing 2-keto-4-methylthiobutyrate, while nickel-binding promotes an acireductone dioxygenase reaction producing 3-(methylsulfanyl)propanoate.</text>
</comment>
<comment type="pathway">
    <text evidence="1">Amino-acid biosynthesis; L-methionine biosynthesis via salvage pathway; L-methionine from S-methyl-5-thio-alpha-D-ribose 1-phosphate: step 5/6.</text>
</comment>
<comment type="subcellular location">
    <subcellularLocation>
        <location evidence="1">Cytoplasm</location>
    </subcellularLocation>
    <subcellularLocation>
        <location evidence="1">Nucleus</location>
    </subcellularLocation>
</comment>
<comment type="similarity">
    <text evidence="1">Belongs to the acireductone dioxygenase (ARD) family.</text>
</comment>